<gene>
    <name evidence="1" type="primary">glpG</name>
    <name type="ordered locus">YPTB3778</name>
</gene>
<feature type="chain" id="PRO_0000321704" description="Rhomboid protease GlpG">
    <location>
        <begin position="1"/>
        <end position="278"/>
    </location>
</feature>
<feature type="transmembrane region" description="Helical" evidence="1">
    <location>
        <begin position="94"/>
        <end position="114"/>
    </location>
</feature>
<feature type="transmembrane region" description="Helical" evidence="1">
    <location>
        <begin position="143"/>
        <end position="163"/>
    </location>
</feature>
<feature type="transmembrane region" description="Helical" evidence="1">
    <location>
        <begin position="175"/>
        <end position="195"/>
    </location>
</feature>
<feature type="transmembrane region" description="Helical" evidence="1">
    <location>
        <begin position="196"/>
        <end position="216"/>
    </location>
</feature>
<feature type="transmembrane region" description="Helical" evidence="1">
    <location>
        <begin position="224"/>
        <end position="241"/>
    </location>
</feature>
<feature type="transmembrane region" description="Helical" evidence="1">
    <location>
        <begin position="245"/>
        <end position="267"/>
    </location>
</feature>
<feature type="active site" description="Nucleophile" evidence="1">
    <location>
        <position position="202"/>
    </location>
</feature>
<feature type="active site" evidence="1">
    <location>
        <position position="255"/>
    </location>
</feature>
<reference key="1">
    <citation type="journal article" date="2004" name="Proc. Natl. Acad. Sci. U.S.A.">
        <title>Insights into the evolution of Yersinia pestis through whole-genome comparison with Yersinia pseudotuberculosis.</title>
        <authorList>
            <person name="Chain P.S.G."/>
            <person name="Carniel E."/>
            <person name="Larimer F.W."/>
            <person name="Lamerdin J."/>
            <person name="Stoutland P.O."/>
            <person name="Regala W.M."/>
            <person name="Georgescu A.M."/>
            <person name="Vergez L.M."/>
            <person name="Land M.L."/>
            <person name="Motin V.L."/>
            <person name="Brubaker R.R."/>
            <person name="Fowler J."/>
            <person name="Hinnebusch J."/>
            <person name="Marceau M."/>
            <person name="Medigue C."/>
            <person name="Simonet M."/>
            <person name="Chenal-Francisque V."/>
            <person name="Souza B."/>
            <person name="Dacheux D."/>
            <person name="Elliott J.M."/>
            <person name="Derbise A."/>
            <person name="Hauser L.J."/>
            <person name="Garcia E."/>
        </authorList>
    </citation>
    <scope>NUCLEOTIDE SEQUENCE [LARGE SCALE GENOMIC DNA]</scope>
    <source>
        <strain>IP32953</strain>
    </source>
</reference>
<evidence type="ECO:0000255" key="1">
    <source>
        <dbReference type="HAMAP-Rule" id="MF_01594"/>
    </source>
</evidence>
<protein>
    <recommendedName>
        <fullName evidence="1">Rhomboid protease GlpG</fullName>
        <ecNumber evidence="1">3.4.21.105</ecNumber>
    </recommendedName>
    <alternativeName>
        <fullName evidence="1">Intramembrane serine protease</fullName>
    </alternativeName>
</protein>
<accession>Q664J1</accession>
<proteinExistence type="inferred from homology"/>
<comment type="function">
    <text evidence="1">Rhomboid-type serine protease that catalyzes intramembrane proteolysis.</text>
</comment>
<comment type="catalytic activity">
    <reaction evidence="1">
        <text>Cleaves type-1 transmembrane domains using a catalytic dyad composed of serine and histidine that are contributed by different transmembrane domains.</text>
        <dbReference type="EC" id="3.4.21.105"/>
    </reaction>
</comment>
<comment type="subcellular location">
    <subcellularLocation>
        <location evidence="1">Cell inner membrane</location>
        <topology evidence="1">Multi-pass membrane protein</topology>
    </subcellularLocation>
</comment>
<comment type="similarity">
    <text evidence="1">Belongs to the peptidase S54 family.</text>
</comment>
<keyword id="KW-0997">Cell inner membrane</keyword>
<keyword id="KW-1003">Cell membrane</keyword>
<keyword id="KW-0378">Hydrolase</keyword>
<keyword id="KW-0472">Membrane</keyword>
<keyword id="KW-0645">Protease</keyword>
<keyword id="KW-0720">Serine protease</keyword>
<keyword id="KW-0812">Transmembrane</keyword>
<keyword id="KW-1133">Transmembrane helix</keyword>
<sequence>MTRVIVISNLRLAQAFVDYMATHHVALEIRPDAQGVEIWLADDEQLSAVQHELEQFLLDPLNPRYQAASWQAGNVNSNLPYQRFSYLQTLRSQAGPLTLSVMVLCIAIYILMLITGDMAVMSWLAWPYNSSQYLQIWRWVSHAFLHFSLLHILFNLMWWWYLGGQMEKRLGTSKLLVLTIVSAVFSGWGQSLFSGANFGGLSGVVYALMGYVWLTGERAPEHGISLPRGLMAFSVLWLIAGYFDILGLSIANAAHVSGLIIGLLMAFWDTRNSARTVQ</sequence>
<dbReference type="EC" id="3.4.21.105" evidence="1"/>
<dbReference type="EMBL" id="BX936398">
    <property type="protein sequence ID" value="CAH23016.1"/>
    <property type="molecule type" value="Genomic_DNA"/>
</dbReference>
<dbReference type="RefSeq" id="WP_011193245.1">
    <property type="nucleotide sequence ID" value="NC_006155.1"/>
</dbReference>
<dbReference type="SMR" id="Q664J1"/>
<dbReference type="MEROPS" id="S54.016"/>
<dbReference type="GeneID" id="49784227"/>
<dbReference type="KEGG" id="ypo:BZ17_2807"/>
<dbReference type="KEGG" id="yps:YPTB3778"/>
<dbReference type="PATRIC" id="fig|273123.14.peg.2945"/>
<dbReference type="Proteomes" id="UP000001011">
    <property type="component" value="Chromosome"/>
</dbReference>
<dbReference type="GO" id="GO:0005886">
    <property type="term" value="C:plasma membrane"/>
    <property type="evidence" value="ECO:0007669"/>
    <property type="project" value="UniProtKB-SubCell"/>
</dbReference>
<dbReference type="GO" id="GO:0004252">
    <property type="term" value="F:serine-type endopeptidase activity"/>
    <property type="evidence" value="ECO:0007669"/>
    <property type="project" value="UniProtKB-UniRule"/>
</dbReference>
<dbReference type="GO" id="GO:0006508">
    <property type="term" value="P:proteolysis"/>
    <property type="evidence" value="ECO:0007669"/>
    <property type="project" value="UniProtKB-UniRule"/>
</dbReference>
<dbReference type="Gene3D" id="3.30.70.2350">
    <property type="match status" value="1"/>
</dbReference>
<dbReference type="Gene3D" id="1.20.1540.10">
    <property type="entry name" value="Rhomboid-like"/>
    <property type="match status" value="1"/>
</dbReference>
<dbReference type="HAMAP" id="MF_01594">
    <property type="entry name" value="Rhomboid_GlpG"/>
    <property type="match status" value="1"/>
</dbReference>
<dbReference type="InterPro" id="IPR038236">
    <property type="entry name" value="GlpG_N_sf"/>
</dbReference>
<dbReference type="InterPro" id="IPR022732">
    <property type="entry name" value="Peptidase_S54_GlpG_N"/>
</dbReference>
<dbReference type="InterPro" id="IPR022764">
    <property type="entry name" value="Peptidase_S54_rhomboid_dom"/>
</dbReference>
<dbReference type="InterPro" id="IPR035952">
    <property type="entry name" value="Rhomboid-like_sf"/>
</dbReference>
<dbReference type="InterPro" id="IPR023662">
    <property type="entry name" value="Rhomboid_protease_GlpG"/>
</dbReference>
<dbReference type="NCBIfam" id="NF008155">
    <property type="entry name" value="PRK10907.1"/>
    <property type="match status" value="1"/>
</dbReference>
<dbReference type="NCBIfam" id="TIGR04239">
    <property type="entry name" value="rhombo_GlpG"/>
    <property type="match status" value="1"/>
</dbReference>
<dbReference type="PANTHER" id="PTHR43066:SF26">
    <property type="entry name" value="RHOMBOID PROTEASE GLPG"/>
    <property type="match status" value="1"/>
</dbReference>
<dbReference type="PANTHER" id="PTHR43066">
    <property type="entry name" value="RHOMBOID-RELATED PROTEIN"/>
    <property type="match status" value="1"/>
</dbReference>
<dbReference type="Pfam" id="PF01694">
    <property type="entry name" value="Rhomboid"/>
    <property type="match status" value="1"/>
</dbReference>
<dbReference type="Pfam" id="PF12122">
    <property type="entry name" value="Rhomboid_N"/>
    <property type="match status" value="1"/>
</dbReference>
<dbReference type="SUPFAM" id="SSF144091">
    <property type="entry name" value="Rhomboid-like"/>
    <property type="match status" value="1"/>
</dbReference>
<name>GLPG_YERPS</name>
<organism>
    <name type="scientific">Yersinia pseudotuberculosis serotype I (strain IP32953)</name>
    <dbReference type="NCBI Taxonomy" id="273123"/>
    <lineage>
        <taxon>Bacteria</taxon>
        <taxon>Pseudomonadati</taxon>
        <taxon>Pseudomonadota</taxon>
        <taxon>Gammaproteobacteria</taxon>
        <taxon>Enterobacterales</taxon>
        <taxon>Yersiniaceae</taxon>
        <taxon>Yersinia</taxon>
    </lineage>
</organism>